<feature type="chain" id="PRO_1000015136" description="Small ribosomal subunit protein uS10">
    <location>
        <begin position="1"/>
        <end position="103"/>
    </location>
</feature>
<proteinExistence type="inferred from homology"/>
<evidence type="ECO:0000255" key="1">
    <source>
        <dbReference type="HAMAP-Rule" id="MF_00508"/>
    </source>
</evidence>
<evidence type="ECO:0000305" key="2"/>
<keyword id="KW-0687">Ribonucleoprotein</keyword>
<keyword id="KW-0689">Ribosomal protein</keyword>
<dbReference type="EMBL" id="AM286415">
    <property type="protein sequence ID" value="CAL13943.1"/>
    <property type="molecule type" value="Genomic_DNA"/>
</dbReference>
<dbReference type="RefSeq" id="WP_001181005.1">
    <property type="nucleotide sequence ID" value="NC_008800.1"/>
</dbReference>
<dbReference type="RefSeq" id="YP_001008069.1">
    <property type="nucleotide sequence ID" value="NC_008800.1"/>
</dbReference>
<dbReference type="SMR" id="A1JS48"/>
<dbReference type="GeneID" id="98390443"/>
<dbReference type="KEGG" id="yen:YE3924"/>
<dbReference type="PATRIC" id="fig|393305.7.peg.4174"/>
<dbReference type="eggNOG" id="COG0051">
    <property type="taxonomic scope" value="Bacteria"/>
</dbReference>
<dbReference type="HOGENOM" id="CLU_122625_1_3_6"/>
<dbReference type="OrthoDB" id="9804464at2"/>
<dbReference type="PRO" id="PR:A1JS48"/>
<dbReference type="Proteomes" id="UP000000642">
    <property type="component" value="Chromosome"/>
</dbReference>
<dbReference type="GO" id="GO:1990904">
    <property type="term" value="C:ribonucleoprotein complex"/>
    <property type="evidence" value="ECO:0007669"/>
    <property type="project" value="UniProtKB-KW"/>
</dbReference>
<dbReference type="GO" id="GO:0005840">
    <property type="term" value="C:ribosome"/>
    <property type="evidence" value="ECO:0007669"/>
    <property type="project" value="UniProtKB-KW"/>
</dbReference>
<dbReference type="GO" id="GO:0003735">
    <property type="term" value="F:structural constituent of ribosome"/>
    <property type="evidence" value="ECO:0007669"/>
    <property type="project" value="InterPro"/>
</dbReference>
<dbReference type="GO" id="GO:0000049">
    <property type="term" value="F:tRNA binding"/>
    <property type="evidence" value="ECO:0007669"/>
    <property type="project" value="UniProtKB-UniRule"/>
</dbReference>
<dbReference type="GO" id="GO:0006412">
    <property type="term" value="P:translation"/>
    <property type="evidence" value="ECO:0007669"/>
    <property type="project" value="UniProtKB-UniRule"/>
</dbReference>
<dbReference type="FunFam" id="3.30.70.600:FF:000001">
    <property type="entry name" value="30S ribosomal protein S10"/>
    <property type="match status" value="1"/>
</dbReference>
<dbReference type="Gene3D" id="3.30.70.600">
    <property type="entry name" value="Ribosomal protein S10 domain"/>
    <property type="match status" value="1"/>
</dbReference>
<dbReference type="HAMAP" id="MF_00508">
    <property type="entry name" value="Ribosomal_uS10"/>
    <property type="match status" value="1"/>
</dbReference>
<dbReference type="InterPro" id="IPR001848">
    <property type="entry name" value="Ribosomal_uS10"/>
</dbReference>
<dbReference type="InterPro" id="IPR018268">
    <property type="entry name" value="Ribosomal_uS10_CS"/>
</dbReference>
<dbReference type="InterPro" id="IPR027486">
    <property type="entry name" value="Ribosomal_uS10_dom"/>
</dbReference>
<dbReference type="InterPro" id="IPR036838">
    <property type="entry name" value="Ribosomal_uS10_dom_sf"/>
</dbReference>
<dbReference type="NCBIfam" id="NF001861">
    <property type="entry name" value="PRK00596.1"/>
    <property type="match status" value="1"/>
</dbReference>
<dbReference type="NCBIfam" id="TIGR01049">
    <property type="entry name" value="rpsJ_bact"/>
    <property type="match status" value="1"/>
</dbReference>
<dbReference type="PANTHER" id="PTHR11700">
    <property type="entry name" value="30S RIBOSOMAL PROTEIN S10 FAMILY MEMBER"/>
    <property type="match status" value="1"/>
</dbReference>
<dbReference type="Pfam" id="PF00338">
    <property type="entry name" value="Ribosomal_S10"/>
    <property type="match status" value="1"/>
</dbReference>
<dbReference type="PRINTS" id="PR00971">
    <property type="entry name" value="RIBOSOMALS10"/>
</dbReference>
<dbReference type="SMART" id="SM01403">
    <property type="entry name" value="Ribosomal_S10"/>
    <property type="match status" value="1"/>
</dbReference>
<dbReference type="SUPFAM" id="SSF54999">
    <property type="entry name" value="Ribosomal protein S10"/>
    <property type="match status" value="1"/>
</dbReference>
<dbReference type="PROSITE" id="PS00361">
    <property type="entry name" value="RIBOSOMAL_S10"/>
    <property type="match status" value="1"/>
</dbReference>
<reference key="1">
    <citation type="journal article" date="2006" name="PLoS Genet.">
        <title>The complete genome sequence and comparative genome analysis of the high pathogenicity Yersinia enterocolitica strain 8081.</title>
        <authorList>
            <person name="Thomson N.R."/>
            <person name="Howard S."/>
            <person name="Wren B.W."/>
            <person name="Holden M.T.G."/>
            <person name="Crossman L."/>
            <person name="Challis G.L."/>
            <person name="Churcher C."/>
            <person name="Mungall K."/>
            <person name="Brooks K."/>
            <person name="Chillingworth T."/>
            <person name="Feltwell T."/>
            <person name="Abdellah Z."/>
            <person name="Hauser H."/>
            <person name="Jagels K."/>
            <person name="Maddison M."/>
            <person name="Moule S."/>
            <person name="Sanders M."/>
            <person name="Whitehead S."/>
            <person name="Quail M.A."/>
            <person name="Dougan G."/>
            <person name="Parkhill J."/>
            <person name="Prentice M.B."/>
        </authorList>
    </citation>
    <scope>NUCLEOTIDE SEQUENCE [LARGE SCALE GENOMIC DNA]</scope>
    <source>
        <strain>NCTC 13174 / 8081</strain>
    </source>
</reference>
<name>RS10_YERE8</name>
<sequence length="103" mass="11767">MQNQRIRIRLKAFDHRLIDQSTAEIVETAKRTGAQVRGPIPLPTRKERFTVLISPHVNKDARDQYEIRTHKRLVDIVEPTEKTVDALMRLDLAAGVDVQISLG</sequence>
<protein>
    <recommendedName>
        <fullName evidence="1">Small ribosomal subunit protein uS10</fullName>
    </recommendedName>
    <alternativeName>
        <fullName evidence="2">30S ribosomal protein S10</fullName>
    </alternativeName>
</protein>
<organism>
    <name type="scientific">Yersinia enterocolitica serotype O:8 / biotype 1B (strain NCTC 13174 / 8081)</name>
    <dbReference type="NCBI Taxonomy" id="393305"/>
    <lineage>
        <taxon>Bacteria</taxon>
        <taxon>Pseudomonadati</taxon>
        <taxon>Pseudomonadota</taxon>
        <taxon>Gammaproteobacteria</taxon>
        <taxon>Enterobacterales</taxon>
        <taxon>Yersiniaceae</taxon>
        <taxon>Yersinia</taxon>
    </lineage>
</organism>
<accession>A1JS48</accession>
<comment type="function">
    <text evidence="1">Involved in the binding of tRNA to the ribosomes.</text>
</comment>
<comment type="subunit">
    <text evidence="1">Part of the 30S ribosomal subunit.</text>
</comment>
<comment type="similarity">
    <text evidence="1">Belongs to the universal ribosomal protein uS10 family.</text>
</comment>
<gene>
    <name evidence="1" type="primary">rpsJ</name>
    <name type="ordered locus">YE3924</name>
</gene>